<protein>
    <recommendedName>
        <fullName>Secreted protein F2</fullName>
    </recommendedName>
</protein>
<reference evidence="3" key="1">
    <citation type="submission" date="2006-05" db="UniProtKB">
        <title>Search for elicitins in Pythium hypogynum.</title>
        <authorList>
            <person name="Bala K."/>
            <person name="Belbahri L."/>
            <person name="Calmin G."/>
            <person name="Paul B."/>
            <person name="Lefort F."/>
        </authorList>
    </citation>
    <scope>PROTEIN SEQUENCE</scope>
    <scope>SUBCELLULAR LOCATION</scope>
</reference>
<evidence type="ECO:0000269" key="1">
    <source ref="1"/>
</evidence>
<evidence type="ECO:0000303" key="2">
    <source ref="1"/>
</evidence>
<evidence type="ECO:0000305" key="3"/>
<proteinExistence type="evidence at protein level"/>
<feature type="chain" id="PRO_0000245327" description="Secreted protein F2">
    <location>
        <begin position="1" status="less than"/>
        <end position="32" status="greater than"/>
    </location>
</feature>
<feature type="non-consecutive residues" evidence="2">
    <location>
        <begin position="12"/>
        <end position="13"/>
    </location>
</feature>
<feature type="non-consecutive residues" evidence="2">
    <location>
        <begin position="23"/>
        <end position="24"/>
    </location>
</feature>
<feature type="non-terminal residue" evidence="2">
    <location>
        <position position="1"/>
    </location>
</feature>
<feature type="non-terminal residue" evidence="2">
    <location>
        <position position="32"/>
    </location>
</feature>
<organism>
    <name type="scientific">Globisporangium hypogynum</name>
    <name type="common">Pythium hypogynum</name>
    <dbReference type="NCBI Taxonomy" id="255163"/>
    <lineage>
        <taxon>Eukaryota</taxon>
        <taxon>Sar</taxon>
        <taxon>Stramenopiles</taxon>
        <taxon>Oomycota</taxon>
        <taxon>Pythiales</taxon>
        <taxon>Pythiaceae</taxon>
        <taxon>Globisporangium</taxon>
    </lineage>
</organism>
<dbReference type="SMR" id="P84877"/>
<dbReference type="GO" id="GO:0005576">
    <property type="term" value="C:extracellular region"/>
    <property type="evidence" value="ECO:0007669"/>
    <property type="project" value="UniProtKB-SubCell"/>
</dbReference>
<accession>P84877</accession>
<name>SPF2_GLOHY</name>
<keyword id="KW-0903">Direct protein sequencing</keyword>
<keyword id="KW-0964">Secreted</keyword>
<comment type="subcellular location">
    <subcellularLocation>
        <location evidence="1">Secreted</location>
    </subcellularLocation>
</comment>
<sequence>CSYPSKLCNNHRANVNQQRMQQKLIRQQMVER</sequence>